<accession>Q02ZD2</accession>
<sequence length="216" mass="24392">MTDHKPSKSLPKATAKRLPQYYRLFKSLVEENVTRTNSQLISEKIGVDAATIRRDFSLFGELGRRGYGYETKVLRDFFGELLGQDQETHIALIGVGNLGRALLHYQFQDRNKMRITQAYDISGNPLVGTQTDDGIPIYNISDLEKNVKKSDIKTAILSVRKENAQEVVDTLVKAGIKGFLNFAPIRLKVPSDVVVQSIDLTKELQTLLFFMNDNKQ</sequence>
<organism>
    <name type="scientific">Lactococcus lactis subsp. cremoris (strain SK11)</name>
    <dbReference type="NCBI Taxonomy" id="272622"/>
    <lineage>
        <taxon>Bacteria</taxon>
        <taxon>Bacillati</taxon>
        <taxon>Bacillota</taxon>
        <taxon>Bacilli</taxon>
        <taxon>Lactobacillales</taxon>
        <taxon>Streptococcaceae</taxon>
        <taxon>Lactococcus</taxon>
        <taxon>Lactococcus cremoris subsp. cremoris</taxon>
    </lineage>
</organism>
<gene>
    <name evidence="1" type="primary">rex</name>
    <name type="ordered locus">LACR_1156</name>
</gene>
<proteinExistence type="inferred from homology"/>
<evidence type="ECO:0000255" key="1">
    <source>
        <dbReference type="HAMAP-Rule" id="MF_01131"/>
    </source>
</evidence>
<protein>
    <recommendedName>
        <fullName evidence="1">Redox-sensing transcriptional repressor Rex</fullName>
    </recommendedName>
</protein>
<comment type="function">
    <text evidence="1">Modulates transcription in response to changes in cellular NADH/NAD(+) redox state.</text>
</comment>
<comment type="subunit">
    <text evidence="1">Homodimer.</text>
</comment>
<comment type="subcellular location">
    <subcellularLocation>
        <location evidence="1">Cytoplasm</location>
    </subcellularLocation>
</comment>
<comment type="similarity">
    <text evidence="1">Belongs to the transcriptional regulatory Rex family.</text>
</comment>
<reference key="1">
    <citation type="journal article" date="2006" name="Proc. Natl. Acad. Sci. U.S.A.">
        <title>Comparative genomics of the lactic acid bacteria.</title>
        <authorList>
            <person name="Makarova K.S."/>
            <person name="Slesarev A."/>
            <person name="Wolf Y.I."/>
            <person name="Sorokin A."/>
            <person name="Mirkin B."/>
            <person name="Koonin E.V."/>
            <person name="Pavlov A."/>
            <person name="Pavlova N."/>
            <person name="Karamychev V."/>
            <person name="Polouchine N."/>
            <person name="Shakhova V."/>
            <person name="Grigoriev I."/>
            <person name="Lou Y."/>
            <person name="Rohksar D."/>
            <person name="Lucas S."/>
            <person name="Huang K."/>
            <person name="Goodstein D.M."/>
            <person name="Hawkins T."/>
            <person name="Plengvidhya V."/>
            <person name="Welker D."/>
            <person name="Hughes J."/>
            <person name="Goh Y."/>
            <person name="Benson A."/>
            <person name="Baldwin K."/>
            <person name="Lee J.-H."/>
            <person name="Diaz-Muniz I."/>
            <person name="Dosti B."/>
            <person name="Smeianov V."/>
            <person name="Wechter W."/>
            <person name="Barabote R."/>
            <person name="Lorca G."/>
            <person name="Altermann E."/>
            <person name="Barrangou R."/>
            <person name="Ganesan B."/>
            <person name="Xie Y."/>
            <person name="Rawsthorne H."/>
            <person name="Tamir D."/>
            <person name="Parker C."/>
            <person name="Breidt F."/>
            <person name="Broadbent J.R."/>
            <person name="Hutkins R."/>
            <person name="O'Sullivan D."/>
            <person name="Steele J."/>
            <person name="Unlu G."/>
            <person name="Saier M.H. Jr."/>
            <person name="Klaenhammer T."/>
            <person name="Richardson P."/>
            <person name="Kozyavkin S."/>
            <person name="Weimer B.C."/>
            <person name="Mills D.A."/>
        </authorList>
    </citation>
    <scope>NUCLEOTIDE SEQUENCE [LARGE SCALE GENOMIC DNA]</scope>
    <source>
        <strain>SK11</strain>
    </source>
</reference>
<keyword id="KW-0963">Cytoplasm</keyword>
<keyword id="KW-0238">DNA-binding</keyword>
<keyword id="KW-0520">NAD</keyword>
<keyword id="KW-0678">Repressor</keyword>
<keyword id="KW-0804">Transcription</keyword>
<keyword id="KW-0805">Transcription regulation</keyword>
<name>REX_LACLS</name>
<feature type="chain" id="PRO_1000065407" description="Redox-sensing transcriptional repressor Rex">
    <location>
        <begin position="1"/>
        <end position="216"/>
    </location>
</feature>
<feature type="DNA-binding region" description="H-T-H motif" evidence="1">
    <location>
        <begin position="20"/>
        <end position="59"/>
    </location>
</feature>
<feature type="binding site" evidence="1">
    <location>
        <begin position="94"/>
        <end position="99"/>
    </location>
    <ligand>
        <name>NAD(+)</name>
        <dbReference type="ChEBI" id="CHEBI:57540"/>
    </ligand>
</feature>
<dbReference type="EMBL" id="CP000425">
    <property type="protein sequence ID" value="ABJ72690.1"/>
    <property type="molecule type" value="Genomic_DNA"/>
</dbReference>
<dbReference type="RefSeq" id="WP_003132737.1">
    <property type="nucleotide sequence ID" value="NC_008527.1"/>
</dbReference>
<dbReference type="SMR" id="Q02ZD2"/>
<dbReference type="KEGG" id="llc:LACR_1156"/>
<dbReference type="HOGENOM" id="CLU_061534_1_1_9"/>
<dbReference type="Proteomes" id="UP000000240">
    <property type="component" value="Chromosome"/>
</dbReference>
<dbReference type="GO" id="GO:0005737">
    <property type="term" value="C:cytoplasm"/>
    <property type="evidence" value="ECO:0007669"/>
    <property type="project" value="UniProtKB-SubCell"/>
</dbReference>
<dbReference type="GO" id="GO:0003677">
    <property type="term" value="F:DNA binding"/>
    <property type="evidence" value="ECO:0007669"/>
    <property type="project" value="UniProtKB-UniRule"/>
</dbReference>
<dbReference type="GO" id="GO:0003700">
    <property type="term" value="F:DNA-binding transcription factor activity"/>
    <property type="evidence" value="ECO:0007669"/>
    <property type="project" value="UniProtKB-UniRule"/>
</dbReference>
<dbReference type="GO" id="GO:0045892">
    <property type="term" value="P:negative regulation of DNA-templated transcription"/>
    <property type="evidence" value="ECO:0007669"/>
    <property type="project" value="InterPro"/>
</dbReference>
<dbReference type="GO" id="GO:0051775">
    <property type="term" value="P:response to redox state"/>
    <property type="evidence" value="ECO:0007669"/>
    <property type="project" value="InterPro"/>
</dbReference>
<dbReference type="Gene3D" id="3.40.50.720">
    <property type="entry name" value="NAD(P)-binding Rossmann-like Domain"/>
    <property type="match status" value="1"/>
</dbReference>
<dbReference type="Gene3D" id="1.10.10.10">
    <property type="entry name" value="Winged helix-like DNA-binding domain superfamily/Winged helix DNA-binding domain"/>
    <property type="match status" value="1"/>
</dbReference>
<dbReference type="HAMAP" id="MF_01131">
    <property type="entry name" value="Rex"/>
    <property type="match status" value="1"/>
</dbReference>
<dbReference type="InterPro" id="IPR003781">
    <property type="entry name" value="CoA-bd"/>
</dbReference>
<dbReference type="InterPro" id="IPR036291">
    <property type="entry name" value="NAD(P)-bd_dom_sf"/>
</dbReference>
<dbReference type="InterPro" id="IPR009718">
    <property type="entry name" value="Rex_DNA-bd_C_dom"/>
</dbReference>
<dbReference type="InterPro" id="IPR022876">
    <property type="entry name" value="Tscrpt_rep_Rex"/>
</dbReference>
<dbReference type="InterPro" id="IPR036388">
    <property type="entry name" value="WH-like_DNA-bd_sf"/>
</dbReference>
<dbReference type="InterPro" id="IPR036390">
    <property type="entry name" value="WH_DNA-bd_sf"/>
</dbReference>
<dbReference type="NCBIfam" id="NF003989">
    <property type="entry name" value="PRK05472.1-3"/>
    <property type="match status" value="1"/>
</dbReference>
<dbReference type="NCBIfam" id="NF003991">
    <property type="entry name" value="PRK05472.1-5"/>
    <property type="match status" value="1"/>
</dbReference>
<dbReference type="NCBIfam" id="NF003994">
    <property type="entry name" value="PRK05472.2-3"/>
    <property type="match status" value="1"/>
</dbReference>
<dbReference type="NCBIfam" id="NF003995">
    <property type="entry name" value="PRK05472.2-4"/>
    <property type="match status" value="1"/>
</dbReference>
<dbReference type="NCBIfam" id="NF003996">
    <property type="entry name" value="PRK05472.2-5"/>
    <property type="match status" value="1"/>
</dbReference>
<dbReference type="PANTHER" id="PTHR35786">
    <property type="entry name" value="REDOX-SENSING TRANSCRIPTIONAL REPRESSOR REX"/>
    <property type="match status" value="1"/>
</dbReference>
<dbReference type="PANTHER" id="PTHR35786:SF1">
    <property type="entry name" value="REDOX-SENSING TRANSCRIPTIONAL REPRESSOR REX 1"/>
    <property type="match status" value="1"/>
</dbReference>
<dbReference type="Pfam" id="PF02629">
    <property type="entry name" value="CoA_binding"/>
    <property type="match status" value="1"/>
</dbReference>
<dbReference type="Pfam" id="PF06971">
    <property type="entry name" value="Put_DNA-bind_N"/>
    <property type="match status" value="1"/>
</dbReference>
<dbReference type="SMART" id="SM00881">
    <property type="entry name" value="CoA_binding"/>
    <property type="match status" value="1"/>
</dbReference>
<dbReference type="SUPFAM" id="SSF51735">
    <property type="entry name" value="NAD(P)-binding Rossmann-fold domains"/>
    <property type="match status" value="1"/>
</dbReference>
<dbReference type="SUPFAM" id="SSF46785">
    <property type="entry name" value="Winged helix' DNA-binding domain"/>
    <property type="match status" value="1"/>
</dbReference>